<evidence type="ECO:0000250" key="1">
    <source>
        <dbReference type="UniProtKB" id="P43253"/>
    </source>
</evidence>
<evidence type="ECO:0000255" key="2"/>
<evidence type="ECO:0000255" key="3">
    <source>
        <dbReference type="PROSITE-ProRule" id="PRU00521"/>
    </source>
</evidence>
<evidence type="ECO:0000256" key="4">
    <source>
        <dbReference type="SAM" id="MobiDB-lite"/>
    </source>
</evidence>
<evidence type="ECO:0000269" key="5">
    <source>
    </source>
</evidence>
<evidence type="ECO:0000269" key="6">
    <source>
    </source>
</evidence>
<evidence type="ECO:0000305" key="7"/>
<evidence type="ECO:0007829" key="8">
    <source>
        <dbReference type="PDB" id="4F8K"/>
    </source>
</evidence>
<accession>P43252</accession>
<accession>Q52KE5</accession>
<feature type="chain" id="PRO_0000070076" description="Prostacyclin receptor">
    <location>
        <begin position="1"/>
        <end position="412"/>
    </location>
</feature>
<feature type="propeptide" id="PRO_0000240005" description="Removed in mature form" evidence="2">
    <location>
        <begin position="413"/>
        <end position="415"/>
    </location>
</feature>
<feature type="topological domain" description="Extracellular" evidence="2">
    <location>
        <begin position="1"/>
        <end position="44"/>
    </location>
</feature>
<feature type="transmembrane region" description="Helical; Name=1" evidence="2">
    <location>
        <begin position="45"/>
        <end position="66"/>
    </location>
</feature>
<feature type="topological domain" description="Cytoplasmic" evidence="2">
    <location>
        <begin position="67"/>
        <end position="79"/>
    </location>
</feature>
<feature type="transmembrane region" description="Helical; Name=2" evidence="2">
    <location>
        <begin position="80"/>
        <end position="104"/>
    </location>
</feature>
<feature type="topological domain" description="Extracellular" evidence="2">
    <location>
        <begin position="105"/>
        <end position="122"/>
    </location>
</feature>
<feature type="transmembrane region" description="Helical; Name=3" evidence="2">
    <location>
        <begin position="123"/>
        <end position="143"/>
    </location>
</feature>
<feature type="topological domain" description="Cytoplasmic" evidence="2">
    <location>
        <begin position="144"/>
        <end position="162"/>
    </location>
</feature>
<feature type="transmembrane region" description="Helical; Name=4" evidence="2">
    <location>
        <begin position="163"/>
        <end position="186"/>
    </location>
</feature>
<feature type="topological domain" description="Extracellular" evidence="2">
    <location>
        <begin position="187"/>
        <end position="215"/>
    </location>
</feature>
<feature type="transmembrane region" description="Helical; Name=5" evidence="2">
    <location>
        <begin position="216"/>
        <end position="236"/>
    </location>
</feature>
<feature type="topological domain" description="Cytoplasmic" evidence="2">
    <location>
        <begin position="237"/>
        <end position="263"/>
    </location>
</feature>
<feature type="transmembrane region" description="Helical; Name=6" evidence="2">
    <location>
        <begin position="264"/>
        <end position="288"/>
    </location>
</feature>
<feature type="topological domain" description="Extracellular" evidence="2">
    <location>
        <begin position="289"/>
        <end position="301"/>
    </location>
</feature>
<feature type="transmembrane region" description="Helical; Name=7" evidence="2">
    <location>
        <begin position="302"/>
        <end position="322"/>
    </location>
</feature>
<feature type="topological domain" description="Cytoplasmic" evidence="2">
    <location>
        <begin position="323"/>
        <end position="415"/>
    </location>
</feature>
<feature type="region of interest" description="Disordered" evidence="4">
    <location>
        <begin position="1"/>
        <end position="21"/>
    </location>
</feature>
<feature type="region of interest" description="Disordered" evidence="4">
    <location>
        <begin position="349"/>
        <end position="370"/>
    </location>
</feature>
<feature type="modified residue" description="Phosphoserine" evidence="1">
    <location>
        <position position="365"/>
    </location>
</feature>
<feature type="modified residue" description="Cysteine methyl ester" evidence="7">
    <location>
        <position position="412"/>
    </location>
</feature>
<feature type="lipid moiety-binding region" description="S-farnesyl cysteine" evidence="5">
    <location>
        <position position="412"/>
    </location>
</feature>
<feature type="glycosylation site" description="N-linked (GlcNAc...) asparagine" evidence="2">
    <location>
        <position position="35"/>
    </location>
</feature>
<feature type="disulfide bond" evidence="3">
    <location>
        <begin position="33"/>
        <end position="193"/>
    </location>
</feature>
<feature type="disulfide bond" evidence="3">
    <location>
        <begin position="120"/>
        <end position="198"/>
    </location>
</feature>
<feature type="mutagenesis site" description="Abolishes isoprenylation." evidence="5">
    <original>C</original>
    <variation>S</variation>
    <location>
        <position position="412"/>
    </location>
</feature>
<feature type="strand" evidence="8">
    <location>
        <begin position="411"/>
        <end position="415"/>
    </location>
</feature>
<comment type="function">
    <text>Receptor for prostacyclin (prostaglandin I2 or PGI2). The activity of this receptor is mediated by G(s) proteins which activate adenylate cyclase.</text>
</comment>
<comment type="subunit">
    <text evidence="6">Interacts (non-isoprenylated C-terminus) with PDZK1.</text>
</comment>
<comment type="subcellular location">
    <subcellularLocation>
        <location>Cell membrane</location>
        <topology>Multi-pass membrane protein</topology>
    </subcellularLocation>
</comment>
<comment type="PTM">
    <text evidence="5">Isoprenylation does not influence ligand binding but is required for efficient coupling to the effectors adenylyl cyclase and phospholipase C.</text>
</comment>
<comment type="similarity">
    <text evidence="3">Belongs to the G-protein coupled receptor 1 family.</text>
</comment>
<comment type="sequence caution" evidence="7">
    <conflict type="erroneous initiation">
        <sequence resource="EMBL-CDS" id="BAA05144"/>
    </conflict>
</comment>
<dbReference type="EMBL" id="D26157">
    <property type="protein sequence ID" value="BAA05144.1"/>
    <property type="status" value="ALT_INIT"/>
    <property type="molecule type" value="mRNA"/>
</dbReference>
<dbReference type="EMBL" id="BC094386">
    <property type="protein sequence ID" value="AAH94386.1"/>
    <property type="molecule type" value="mRNA"/>
</dbReference>
<dbReference type="CCDS" id="CCDS20857.2"/>
<dbReference type="PIR" id="A54416">
    <property type="entry name" value="A54416"/>
</dbReference>
<dbReference type="RefSeq" id="NP_032993.2">
    <property type="nucleotide sequence ID" value="NM_008967.4"/>
</dbReference>
<dbReference type="PDB" id="4F8K">
    <property type="method" value="X-ray"/>
    <property type="resolution" value="1.70 A"/>
    <property type="chains" value="A/B=409-415"/>
</dbReference>
<dbReference type="PDBsum" id="4F8K"/>
<dbReference type="SMR" id="P43252"/>
<dbReference type="BioGRID" id="202460">
    <property type="interactions" value="4"/>
</dbReference>
<dbReference type="FunCoup" id="P43252">
    <property type="interactions" value="694"/>
</dbReference>
<dbReference type="STRING" id="10090.ENSMUSP00000122080"/>
<dbReference type="BindingDB" id="P43252"/>
<dbReference type="DrugCentral" id="P43252"/>
<dbReference type="GuidetoPHARMACOLOGY" id="345"/>
<dbReference type="GlyCosmos" id="P43252">
    <property type="glycosylation" value="1 site, No reported glycans"/>
</dbReference>
<dbReference type="GlyGen" id="P43252">
    <property type="glycosylation" value="2 sites"/>
</dbReference>
<dbReference type="iPTMnet" id="P43252"/>
<dbReference type="PhosphoSitePlus" id="P43252"/>
<dbReference type="PaxDb" id="10090-ENSMUSP00000122080"/>
<dbReference type="ProteomicsDB" id="289559"/>
<dbReference type="Antibodypedia" id="18117">
    <property type="antibodies" value="256 antibodies from 29 providers"/>
</dbReference>
<dbReference type="DNASU" id="19222"/>
<dbReference type="Ensembl" id="ENSMUST00000144408.2">
    <property type="protein sequence ID" value="ENSMUSP00000122080.2"/>
    <property type="gene ID" value="ENSMUSG00000043017.10"/>
</dbReference>
<dbReference type="GeneID" id="19222"/>
<dbReference type="KEGG" id="mmu:19222"/>
<dbReference type="UCSC" id="uc009fim.2">
    <property type="organism name" value="mouse"/>
</dbReference>
<dbReference type="AGR" id="MGI:99535"/>
<dbReference type="CTD" id="5739"/>
<dbReference type="MGI" id="MGI:99535">
    <property type="gene designation" value="Ptgir"/>
</dbReference>
<dbReference type="VEuPathDB" id="HostDB:ENSMUSG00000043017"/>
<dbReference type="eggNOG" id="KOG3656">
    <property type="taxonomic scope" value="Eukaryota"/>
</dbReference>
<dbReference type="GeneTree" id="ENSGT01050000244902"/>
<dbReference type="HOGENOM" id="CLU_045991_0_1_1"/>
<dbReference type="InParanoid" id="P43252"/>
<dbReference type="OMA" id="IHPFCGD"/>
<dbReference type="OrthoDB" id="5959154at2759"/>
<dbReference type="PhylomeDB" id="P43252"/>
<dbReference type="TreeFam" id="TF324982"/>
<dbReference type="Reactome" id="R-MMU-391908">
    <property type="pathway name" value="Prostanoid ligand receptors"/>
</dbReference>
<dbReference type="Reactome" id="R-MMU-392851">
    <property type="pathway name" value="Prostacyclin signalling through prostacyclin receptor"/>
</dbReference>
<dbReference type="Reactome" id="R-MMU-418555">
    <property type="pathway name" value="G alpha (s) signalling events"/>
</dbReference>
<dbReference type="BioGRID-ORCS" id="19222">
    <property type="hits" value="5 hits in 80 CRISPR screens"/>
</dbReference>
<dbReference type="EvolutionaryTrace" id="P43252"/>
<dbReference type="PRO" id="PR:P43252"/>
<dbReference type="Proteomes" id="UP000000589">
    <property type="component" value="Chromosome 7"/>
</dbReference>
<dbReference type="RNAct" id="P43252">
    <property type="molecule type" value="protein"/>
</dbReference>
<dbReference type="Bgee" id="ENSMUSG00000043017">
    <property type="expression patterns" value="Expressed in lumbar dorsal root ganglion and 102 other cell types or tissues"/>
</dbReference>
<dbReference type="ExpressionAtlas" id="P43252">
    <property type="expression patterns" value="baseline and differential"/>
</dbReference>
<dbReference type="GO" id="GO:0005829">
    <property type="term" value="C:cytosol"/>
    <property type="evidence" value="ECO:0007669"/>
    <property type="project" value="Ensembl"/>
</dbReference>
<dbReference type="GO" id="GO:0005886">
    <property type="term" value="C:plasma membrane"/>
    <property type="evidence" value="ECO:0007669"/>
    <property type="project" value="UniProtKB-SubCell"/>
</dbReference>
<dbReference type="GO" id="GO:0004930">
    <property type="term" value="F:G protein-coupled receptor activity"/>
    <property type="evidence" value="ECO:0007669"/>
    <property type="project" value="UniProtKB-KW"/>
</dbReference>
<dbReference type="GO" id="GO:0007189">
    <property type="term" value="P:adenylate cyclase-activating G protein-coupled receptor signaling pathway"/>
    <property type="evidence" value="ECO:0000315"/>
    <property type="project" value="BHF-UCL"/>
</dbReference>
<dbReference type="GO" id="GO:0010642">
    <property type="term" value="P:negative regulation of platelet-derived growth factor receptor signaling pathway"/>
    <property type="evidence" value="ECO:0000315"/>
    <property type="project" value="BHF-UCL"/>
</dbReference>
<dbReference type="GO" id="GO:0048662">
    <property type="term" value="P:negative regulation of smooth muscle cell proliferation"/>
    <property type="evidence" value="ECO:0000315"/>
    <property type="project" value="BHF-UCL"/>
</dbReference>
<dbReference type="GO" id="GO:0032496">
    <property type="term" value="P:response to lipopolysaccharide"/>
    <property type="evidence" value="ECO:0000315"/>
    <property type="project" value="MGI"/>
</dbReference>
<dbReference type="FunFam" id="1.20.1070.10:FF:000198">
    <property type="entry name" value="Prostaglandin I2 receptor"/>
    <property type="match status" value="1"/>
</dbReference>
<dbReference type="Gene3D" id="1.20.1070.10">
    <property type="entry name" value="Rhodopsin 7-helix transmembrane proteins"/>
    <property type="match status" value="1"/>
</dbReference>
<dbReference type="InterPro" id="IPR000276">
    <property type="entry name" value="GPCR_Rhodpsn"/>
</dbReference>
<dbReference type="InterPro" id="IPR017452">
    <property type="entry name" value="GPCR_Rhodpsn_7TM"/>
</dbReference>
<dbReference type="InterPro" id="IPR008365">
    <property type="entry name" value="Prostanoid_rcpt"/>
</dbReference>
<dbReference type="InterPro" id="IPR000370">
    <property type="entry name" value="Prostglndn_IP_rcpt"/>
</dbReference>
<dbReference type="PANTHER" id="PTHR11866">
    <property type="entry name" value="G-PROTEIN COUPLED RECEPTOR FAMILY 1 MEMBER"/>
    <property type="match status" value="1"/>
</dbReference>
<dbReference type="PANTHER" id="PTHR11866:SF7">
    <property type="entry name" value="PROSTACYCLIN RECEPTOR"/>
    <property type="match status" value="1"/>
</dbReference>
<dbReference type="Pfam" id="PF00001">
    <property type="entry name" value="7tm_1"/>
    <property type="match status" value="1"/>
</dbReference>
<dbReference type="PRINTS" id="PR01788">
    <property type="entry name" value="PROSTANOIDR"/>
</dbReference>
<dbReference type="PRINTS" id="PR00856">
    <property type="entry name" value="PRSTNOIDIPR"/>
</dbReference>
<dbReference type="SUPFAM" id="SSF81321">
    <property type="entry name" value="Family A G protein-coupled receptor-like"/>
    <property type="match status" value="1"/>
</dbReference>
<dbReference type="PROSITE" id="PS00237">
    <property type="entry name" value="G_PROTEIN_RECEP_F1_1"/>
    <property type="match status" value="1"/>
</dbReference>
<dbReference type="PROSITE" id="PS50262">
    <property type="entry name" value="G_PROTEIN_RECEP_F1_2"/>
    <property type="match status" value="1"/>
</dbReference>
<name>PI2R_MOUSE</name>
<protein>
    <recommendedName>
        <fullName>Prostacyclin receptor</fullName>
    </recommendedName>
    <alternativeName>
        <fullName>Prostaglandin I2 receptor</fullName>
        <shortName>PGI receptor</shortName>
        <shortName>PGI2 receptor</shortName>
    </alternativeName>
    <alternativeName>
        <fullName>Prostanoid IP receptor</fullName>
    </alternativeName>
</protein>
<sequence length="415" mass="44463">MMASDGHPGPPSVTPGSPLSAGGREWQGMAGSCWNITYVQDSVGPATSTLMFVAGVVGNGLALGILGARRRSHPSAFAVLVTGLAVTDLLGTCFLSPAVFVAYARNSSLLGLAHGGTMLCDTFAFAMTFFGLASTLILFAMAVERCLALSHPYLYAQLDGPRCARFALPSIYAFCCLFCSLPLLGLGEHQQYCPGSWCFIRMRSAQPGGCAFSLAYASLMALLVTSIFFCNGSVTLSLYHMYRQQRRHHGSFVPTSRAREDEVYHLILLALMTVIMAVCSLPLMIRGFTQAIAPDSREMGDLLAFRFNAFNPILDPWVFILFRKAVFQRLKFWLCCLCARSVHGDLQAPLSRPASGRRDPPAPTSLQAKEGSWVPLSSWGTGQVAPLTAVPLTGGDGCSVGMPSKSEAIAACSLC</sequence>
<gene>
    <name type="primary">Ptgir</name>
</gene>
<proteinExistence type="evidence at protein level"/>
<organism>
    <name type="scientific">Mus musculus</name>
    <name type="common">Mouse</name>
    <dbReference type="NCBI Taxonomy" id="10090"/>
    <lineage>
        <taxon>Eukaryota</taxon>
        <taxon>Metazoa</taxon>
        <taxon>Chordata</taxon>
        <taxon>Craniata</taxon>
        <taxon>Vertebrata</taxon>
        <taxon>Euteleostomi</taxon>
        <taxon>Mammalia</taxon>
        <taxon>Eutheria</taxon>
        <taxon>Euarchontoglires</taxon>
        <taxon>Glires</taxon>
        <taxon>Rodentia</taxon>
        <taxon>Myomorpha</taxon>
        <taxon>Muroidea</taxon>
        <taxon>Muridae</taxon>
        <taxon>Murinae</taxon>
        <taxon>Mus</taxon>
        <taxon>Mus</taxon>
    </lineage>
</organism>
<reference key="1">
    <citation type="journal article" date="1994" name="J. Biol. Chem.">
        <title>cDNA cloning of a mouse prostacyclin receptor. Multiple signaling pathways and expression in thymic medulla.</title>
        <authorList>
            <person name="Namba T."/>
            <person name="Oida H."/>
            <person name="Sugimoto Y."/>
            <person name="Negishi M."/>
            <person name="Kakizuka A."/>
            <person name="Ichikawa A."/>
            <person name="Narumiya S."/>
        </authorList>
    </citation>
    <scope>NUCLEOTIDE SEQUENCE [MRNA]</scope>
</reference>
<reference key="2">
    <citation type="journal article" date="2004" name="Genome Res.">
        <title>The status, quality, and expansion of the NIH full-length cDNA project: the Mammalian Gene Collection (MGC).</title>
        <authorList>
            <consortium name="The MGC Project Team"/>
        </authorList>
    </citation>
    <scope>NUCLEOTIDE SEQUENCE [LARGE SCALE MRNA]</scope>
    <source>
        <strain>C57BL/6J</strain>
        <tissue>Eye</tissue>
    </source>
</reference>
<reference key="3">
    <citation type="journal article" date="1999" name="J. Biol. Chem.">
        <title>The prostacyclin receptor is isoprenylated. Isoprenylation is required for efficient receptor-effector coupling.</title>
        <authorList>
            <person name="Hayes J.S."/>
            <person name="Lawler O.A."/>
            <person name="Walsh M.T."/>
            <person name="Kinsella B.T."/>
        </authorList>
    </citation>
    <scope>ISOPRENYLATION AT CYS-412</scope>
    <scope>MUTAGENESIS OF CYS-412</scope>
</reference>
<reference key="4">
    <citation type="journal article" date="2013" name="PLoS ONE">
        <title>Molecular analysis of the prostacyclin receptor's interaction with the PDZ1 domain of its adaptor protein PDZK1.</title>
        <authorList>
            <person name="Birrane G."/>
            <person name="Mulvaney E.P."/>
            <person name="Pal R."/>
            <person name="Kinsella B.T."/>
            <person name="Kocher O."/>
        </authorList>
    </citation>
    <scope>X-RAY CRYSTALLOGRAPHY (1.7 ANGSTROMS) OF 409-415 IN COMPLEX WITH PDZK1</scope>
    <scope>INTERACTION WITH PDZK1</scope>
</reference>
<keyword id="KW-0002">3D-structure</keyword>
<keyword id="KW-1003">Cell membrane</keyword>
<keyword id="KW-1015">Disulfide bond</keyword>
<keyword id="KW-0297">G-protein coupled receptor</keyword>
<keyword id="KW-0325">Glycoprotein</keyword>
<keyword id="KW-0449">Lipoprotein</keyword>
<keyword id="KW-0472">Membrane</keyword>
<keyword id="KW-0488">Methylation</keyword>
<keyword id="KW-0597">Phosphoprotein</keyword>
<keyword id="KW-0636">Prenylation</keyword>
<keyword id="KW-0675">Receptor</keyword>
<keyword id="KW-1185">Reference proteome</keyword>
<keyword id="KW-0807">Transducer</keyword>
<keyword id="KW-0812">Transmembrane</keyword>
<keyword id="KW-1133">Transmembrane helix</keyword>